<accession>Q1LIF4</accession>
<feature type="chain" id="PRO_0000335063" description="Glutamyl-tRNA reductase">
    <location>
        <begin position="1"/>
        <end position="434"/>
    </location>
</feature>
<feature type="active site" description="Nucleophile" evidence="1">
    <location>
        <position position="53"/>
    </location>
</feature>
<feature type="binding site" evidence="1">
    <location>
        <begin position="52"/>
        <end position="55"/>
    </location>
    <ligand>
        <name>substrate</name>
    </ligand>
</feature>
<feature type="binding site" evidence="1">
    <location>
        <position position="115"/>
    </location>
    <ligand>
        <name>substrate</name>
    </ligand>
</feature>
<feature type="binding site" evidence="1">
    <location>
        <begin position="120"/>
        <end position="122"/>
    </location>
    <ligand>
        <name>substrate</name>
    </ligand>
</feature>
<feature type="binding site" evidence="1">
    <location>
        <position position="126"/>
    </location>
    <ligand>
        <name>substrate</name>
    </ligand>
</feature>
<feature type="binding site" evidence="1">
    <location>
        <begin position="195"/>
        <end position="200"/>
    </location>
    <ligand>
        <name>NADP(+)</name>
        <dbReference type="ChEBI" id="CHEBI:58349"/>
    </ligand>
</feature>
<feature type="site" description="Important for activity" evidence="1">
    <location>
        <position position="105"/>
    </location>
</feature>
<gene>
    <name evidence="1" type="primary">hemA</name>
    <name type="ordered locus">Rmet_3200</name>
</gene>
<evidence type="ECO:0000255" key="1">
    <source>
        <dbReference type="HAMAP-Rule" id="MF_00087"/>
    </source>
</evidence>
<evidence type="ECO:0000305" key="2"/>
<reference key="1">
    <citation type="journal article" date="2010" name="PLoS ONE">
        <title>The complete genome sequence of Cupriavidus metallidurans strain CH34, a master survivalist in harsh and anthropogenic environments.</title>
        <authorList>
            <person name="Janssen P.J."/>
            <person name="Van Houdt R."/>
            <person name="Moors H."/>
            <person name="Monsieurs P."/>
            <person name="Morin N."/>
            <person name="Michaux A."/>
            <person name="Benotmane M.A."/>
            <person name="Leys N."/>
            <person name="Vallaeys T."/>
            <person name="Lapidus A."/>
            <person name="Monchy S."/>
            <person name="Medigue C."/>
            <person name="Taghavi S."/>
            <person name="McCorkle S."/>
            <person name="Dunn J."/>
            <person name="van der Lelie D."/>
            <person name="Mergeay M."/>
        </authorList>
    </citation>
    <scope>NUCLEOTIDE SEQUENCE [LARGE SCALE GENOMIC DNA]</scope>
    <source>
        <strain>ATCC 43123 / DSM 2839 / NBRC 102507 / CH34</strain>
    </source>
</reference>
<name>HEM1_CUPMC</name>
<comment type="function">
    <text evidence="1">Catalyzes the NADPH-dependent reduction of glutamyl-tRNA(Glu) to glutamate 1-semialdehyde (GSA).</text>
</comment>
<comment type="catalytic activity">
    <reaction evidence="1">
        <text>(S)-4-amino-5-oxopentanoate + tRNA(Glu) + NADP(+) = L-glutamyl-tRNA(Glu) + NADPH + H(+)</text>
        <dbReference type="Rhea" id="RHEA:12344"/>
        <dbReference type="Rhea" id="RHEA-COMP:9663"/>
        <dbReference type="Rhea" id="RHEA-COMP:9680"/>
        <dbReference type="ChEBI" id="CHEBI:15378"/>
        <dbReference type="ChEBI" id="CHEBI:57501"/>
        <dbReference type="ChEBI" id="CHEBI:57783"/>
        <dbReference type="ChEBI" id="CHEBI:58349"/>
        <dbReference type="ChEBI" id="CHEBI:78442"/>
        <dbReference type="ChEBI" id="CHEBI:78520"/>
        <dbReference type="EC" id="1.2.1.70"/>
    </reaction>
</comment>
<comment type="pathway">
    <text evidence="1">Porphyrin-containing compound metabolism; protoporphyrin-IX biosynthesis; 5-aminolevulinate from L-glutamyl-tRNA(Glu): step 1/2.</text>
</comment>
<comment type="subunit">
    <text evidence="1">Homodimer.</text>
</comment>
<comment type="domain">
    <text evidence="1">Possesses an unusual extended V-shaped dimeric structure with each monomer consisting of three distinct domains arranged along a curved 'spinal' alpha-helix. The N-terminal catalytic domain specifically recognizes the glutamate moiety of the substrate. The second domain is the NADPH-binding domain, and the third C-terminal domain is responsible for dimerization.</text>
</comment>
<comment type="miscellaneous">
    <text evidence="1">During catalysis, the active site Cys acts as a nucleophile attacking the alpha-carbonyl group of tRNA-bound glutamate with the formation of a thioester intermediate between enzyme and glutamate, and the concomitant release of tRNA(Glu). The thioester intermediate is finally reduced by direct hydride transfer from NADPH, to form the product GSA.</text>
</comment>
<comment type="similarity">
    <text evidence="1">Belongs to the glutamyl-tRNA reductase family.</text>
</comment>
<comment type="sequence caution" evidence="2">
    <conflict type="erroneous initiation">
        <sequence resource="EMBL-CDS" id="ABF10072"/>
    </conflict>
</comment>
<organism>
    <name type="scientific">Cupriavidus metallidurans (strain ATCC 43123 / DSM 2839 / NBRC 102507 / CH34)</name>
    <name type="common">Ralstonia metallidurans</name>
    <dbReference type="NCBI Taxonomy" id="266264"/>
    <lineage>
        <taxon>Bacteria</taxon>
        <taxon>Pseudomonadati</taxon>
        <taxon>Pseudomonadota</taxon>
        <taxon>Betaproteobacteria</taxon>
        <taxon>Burkholderiales</taxon>
        <taxon>Burkholderiaceae</taxon>
        <taxon>Cupriavidus</taxon>
    </lineage>
</organism>
<dbReference type="EC" id="1.2.1.70" evidence="1"/>
<dbReference type="EMBL" id="CP000352">
    <property type="protein sequence ID" value="ABF10072.1"/>
    <property type="status" value="ALT_INIT"/>
    <property type="molecule type" value="Genomic_DNA"/>
</dbReference>
<dbReference type="RefSeq" id="WP_029308601.1">
    <property type="nucleotide sequence ID" value="NC_007973.1"/>
</dbReference>
<dbReference type="SMR" id="Q1LIF4"/>
<dbReference type="STRING" id="266264.Rmet_3200"/>
<dbReference type="KEGG" id="rme:Rmet_3200"/>
<dbReference type="eggNOG" id="COG0373">
    <property type="taxonomic scope" value="Bacteria"/>
</dbReference>
<dbReference type="HOGENOM" id="CLU_035113_2_2_4"/>
<dbReference type="UniPathway" id="UPA00251">
    <property type="reaction ID" value="UER00316"/>
</dbReference>
<dbReference type="Proteomes" id="UP000002429">
    <property type="component" value="Chromosome"/>
</dbReference>
<dbReference type="GO" id="GO:0008883">
    <property type="term" value="F:glutamyl-tRNA reductase activity"/>
    <property type="evidence" value="ECO:0007669"/>
    <property type="project" value="UniProtKB-UniRule"/>
</dbReference>
<dbReference type="GO" id="GO:0050661">
    <property type="term" value="F:NADP binding"/>
    <property type="evidence" value="ECO:0007669"/>
    <property type="project" value="InterPro"/>
</dbReference>
<dbReference type="GO" id="GO:0019353">
    <property type="term" value="P:protoporphyrinogen IX biosynthetic process from glutamate"/>
    <property type="evidence" value="ECO:0007669"/>
    <property type="project" value="TreeGrafter"/>
</dbReference>
<dbReference type="CDD" id="cd05213">
    <property type="entry name" value="NAD_bind_Glutamyl_tRNA_reduct"/>
    <property type="match status" value="1"/>
</dbReference>
<dbReference type="FunFam" id="3.30.460.30:FF:000001">
    <property type="entry name" value="Glutamyl-tRNA reductase"/>
    <property type="match status" value="1"/>
</dbReference>
<dbReference type="FunFam" id="3.40.50.720:FF:000031">
    <property type="entry name" value="Glutamyl-tRNA reductase"/>
    <property type="match status" value="1"/>
</dbReference>
<dbReference type="Gene3D" id="3.30.460.30">
    <property type="entry name" value="Glutamyl-tRNA reductase, N-terminal domain"/>
    <property type="match status" value="1"/>
</dbReference>
<dbReference type="Gene3D" id="3.40.50.720">
    <property type="entry name" value="NAD(P)-binding Rossmann-like Domain"/>
    <property type="match status" value="1"/>
</dbReference>
<dbReference type="HAMAP" id="MF_00087">
    <property type="entry name" value="Glu_tRNA_reductase"/>
    <property type="match status" value="1"/>
</dbReference>
<dbReference type="InterPro" id="IPR000343">
    <property type="entry name" value="4pyrrol_synth_GluRdtase"/>
</dbReference>
<dbReference type="InterPro" id="IPR015896">
    <property type="entry name" value="4pyrrol_synth_GluRdtase_dimer"/>
</dbReference>
<dbReference type="InterPro" id="IPR015895">
    <property type="entry name" value="4pyrrol_synth_GluRdtase_N"/>
</dbReference>
<dbReference type="InterPro" id="IPR018214">
    <property type="entry name" value="GluRdtase_CS"/>
</dbReference>
<dbReference type="InterPro" id="IPR036453">
    <property type="entry name" value="GluRdtase_dimer_dom_sf"/>
</dbReference>
<dbReference type="InterPro" id="IPR036343">
    <property type="entry name" value="GluRdtase_N_sf"/>
</dbReference>
<dbReference type="InterPro" id="IPR036291">
    <property type="entry name" value="NAD(P)-bd_dom_sf"/>
</dbReference>
<dbReference type="InterPro" id="IPR006151">
    <property type="entry name" value="Shikm_DH/Glu-tRNA_Rdtase"/>
</dbReference>
<dbReference type="NCBIfam" id="TIGR01035">
    <property type="entry name" value="hemA"/>
    <property type="match status" value="1"/>
</dbReference>
<dbReference type="PANTHER" id="PTHR43013">
    <property type="entry name" value="GLUTAMYL-TRNA REDUCTASE"/>
    <property type="match status" value="1"/>
</dbReference>
<dbReference type="PANTHER" id="PTHR43013:SF1">
    <property type="entry name" value="GLUTAMYL-TRNA REDUCTASE"/>
    <property type="match status" value="1"/>
</dbReference>
<dbReference type="Pfam" id="PF00745">
    <property type="entry name" value="GlutR_dimer"/>
    <property type="match status" value="1"/>
</dbReference>
<dbReference type="Pfam" id="PF05201">
    <property type="entry name" value="GlutR_N"/>
    <property type="match status" value="1"/>
</dbReference>
<dbReference type="Pfam" id="PF01488">
    <property type="entry name" value="Shikimate_DH"/>
    <property type="match status" value="1"/>
</dbReference>
<dbReference type="PIRSF" id="PIRSF000445">
    <property type="entry name" value="4pyrrol_synth_GluRdtase"/>
    <property type="match status" value="1"/>
</dbReference>
<dbReference type="SUPFAM" id="SSF69742">
    <property type="entry name" value="Glutamyl tRNA-reductase catalytic, N-terminal domain"/>
    <property type="match status" value="1"/>
</dbReference>
<dbReference type="SUPFAM" id="SSF69075">
    <property type="entry name" value="Glutamyl tRNA-reductase dimerization domain"/>
    <property type="match status" value="1"/>
</dbReference>
<dbReference type="SUPFAM" id="SSF51735">
    <property type="entry name" value="NAD(P)-binding Rossmann-fold domains"/>
    <property type="match status" value="1"/>
</dbReference>
<dbReference type="PROSITE" id="PS00747">
    <property type="entry name" value="GLUTR"/>
    <property type="match status" value="1"/>
</dbReference>
<keyword id="KW-0521">NADP</keyword>
<keyword id="KW-0560">Oxidoreductase</keyword>
<keyword id="KW-0627">Porphyrin biosynthesis</keyword>
<keyword id="KW-1185">Reference proteome</keyword>
<sequence length="434" mass="47578">MQLLAIGINHTTAPVSLRERVAFPLEQIKPALGALRTHLSGRNGTEAAILSTCNRTEIYCATDVLKPGEEGFEHTLRWLAQHHNVPASELAPHLYALPQSEAVRHAFRVASGLDSMVLGETQILGQLKDAVRTAGEAGALGTYLNQLFQRTFAVAKEVRGQTEIGAHSVSMAAAAVRLAQRIFESVSTQRVLFIGAGEMIELCATHFAAQTPRQIVVANRTVERGEKLAEQLSEQGLTTQAIRLQDLGDRLHEFDIVVSCTASSLPIIGLGAVERAVKRRKHRPIMMVDLAVPRDVEPEVARLDDVFLYTVDDLGAVVREGNALRQAAVAQAEAIIDSRVLNFMHWLETRSVVPVIRELQSQGEAIRQAEVERARRMLARGDDPAAVLEALSGALTRKFLHGPTHALNHTQGEDREALLRLVPGLFRHSSHSER</sequence>
<protein>
    <recommendedName>
        <fullName evidence="1">Glutamyl-tRNA reductase</fullName>
        <shortName evidence="1">GluTR</shortName>
        <ecNumber evidence="1">1.2.1.70</ecNumber>
    </recommendedName>
</protein>
<proteinExistence type="inferred from homology"/>